<name>DPFGD_GIBZE</name>
<comment type="function">
    <text evidence="2 3 6">Geranylgeranyl pyrophosphate synthase; part of the gene cluster that mediates the biosynthesis of diterpenoid pyrones (PubMed:32286350, PubMed:37504684). The first step of the pathway is the synthesis of the alpha-pyrone moiety by the polyketide synthase dpfgA via condensation of one acetyl-CoA starter unit with 3 malonyl-CoA units and 2 methylations (Probable). The alpha-pyrone is then combined with geranylgeranyl pyrophosphate (GGPP) formed by the GGPP synthase dpfgD through the action of the prenyltransferase dpfgC to yield a linear alpha-pyrone diterpenoid (Probable). Subsequent steps in the diterpenoid pyrone biosynthetic pathway involve the decalin core formation, which is initiated by the epoxidation of the C10-C11 olefin by the FAD-dependent oxidoreductase dpfgE, and is followed by a cyclization cascade catalyzed by the terpene cyclase dpfgB (Probable). The short chain dehydrogenase/reductase dpfgG then oxidizes the 8S hydroxy group to a ketone and the short chain dehydrogenase/reductase dpfgH reduces the ketone to the 8R hydroxy group to yield higginsianin B (PubMed:32286350). Higginsianin B is further methylated by the methyltransferase dpfgI to produce the intermediate named FDDP B (PubMed:32286350). The cytochrome P450 monooxygenase dfgpJ then catalyzes a three-step oxidation at C-27 to generate a carboxylic acid as well as C-26 hydroxylation (PubMed:32286350). Finally, methyltransferase dpfgK methylates the carboxylic acid generated by dpfgJ, yielding the final diterpenoid pyrones from the pathway which were named FDDP D and FDDP E (PubMed:32286350).</text>
</comment>
<comment type="catalytic activity">
    <reaction evidence="1">
        <text>isopentenyl diphosphate + dimethylallyl diphosphate = (2E)-geranyl diphosphate + diphosphate</text>
        <dbReference type="Rhea" id="RHEA:22408"/>
        <dbReference type="ChEBI" id="CHEBI:33019"/>
        <dbReference type="ChEBI" id="CHEBI:57623"/>
        <dbReference type="ChEBI" id="CHEBI:58057"/>
        <dbReference type="ChEBI" id="CHEBI:128769"/>
        <dbReference type="EC" id="2.5.1.1"/>
    </reaction>
</comment>
<comment type="catalytic activity">
    <reaction evidence="1">
        <text>isopentenyl diphosphate + (2E)-geranyl diphosphate = (2E,6E)-farnesyl diphosphate + diphosphate</text>
        <dbReference type="Rhea" id="RHEA:19361"/>
        <dbReference type="ChEBI" id="CHEBI:33019"/>
        <dbReference type="ChEBI" id="CHEBI:58057"/>
        <dbReference type="ChEBI" id="CHEBI:128769"/>
        <dbReference type="ChEBI" id="CHEBI:175763"/>
        <dbReference type="EC" id="2.5.1.10"/>
    </reaction>
</comment>
<comment type="catalytic activity">
    <reaction evidence="1">
        <text>isopentenyl diphosphate + (2E,6E)-farnesyl diphosphate = (2E,6E,10E)-geranylgeranyl diphosphate + diphosphate</text>
        <dbReference type="Rhea" id="RHEA:17653"/>
        <dbReference type="ChEBI" id="CHEBI:33019"/>
        <dbReference type="ChEBI" id="CHEBI:58756"/>
        <dbReference type="ChEBI" id="CHEBI:128769"/>
        <dbReference type="ChEBI" id="CHEBI:175763"/>
        <dbReference type="EC" id="2.5.1.29"/>
    </reaction>
</comment>
<comment type="cofactor">
    <cofactor evidence="1">
        <name>Mg(2+)</name>
        <dbReference type="ChEBI" id="CHEBI:18420"/>
    </cofactor>
    <text evidence="1">Binds 3 Mg(2+) ions per subunit.</text>
</comment>
<comment type="pathway">
    <text evidence="3">Secondary metabolite biosynthesis; terpenoid biosynthesis.</text>
</comment>
<comment type="disruption phenotype">
    <text evidence="3">Reduces the production of both diterpenoid pyrones FDDP D and FDDP E.</text>
</comment>
<comment type="biotechnology">
    <text evidence="2">Diterpenoid pyrones display various biological activities and FDDP E shows anti-HIV activity (PubMed:32286350). FDDP D and FDDP E show also inhibitory activity of 42-mer-amyloid beta aggregation that is involved in the pathogenesis of Alzheimer's disease (PubMed:32286350).</text>
</comment>
<comment type="similarity">
    <text evidence="5">Belongs to the FPP/GGPP synthase family.</text>
</comment>
<feature type="chain" id="PRO_0000451539" description="Geranylgeranyl pyrophosphate synthase dpfgD">
    <location>
        <begin position="1"/>
        <end position="368"/>
    </location>
</feature>
<feature type="binding site" evidence="1">
    <location>
        <position position="48"/>
    </location>
    <ligand>
        <name>isopentenyl diphosphate</name>
        <dbReference type="ChEBI" id="CHEBI:128769"/>
    </ligand>
</feature>
<feature type="binding site" evidence="1">
    <location>
        <position position="51"/>
    </location>
    <ligand>
        <name>isopentenyl diphosphate</name>
        <dbReference type="ChEBI" id="CHEBI:128769"/>
    </ligand>
</feature>
<feature type="binding site" evidence="1">
    <location>
        <position position="80"/>
    </location>
    <ligand>
        <name>isopentenyl diphosphate</name>
        <dbReference type="ChEBI" id="CHEBI:128769"/>
    </ligand>
</feature>
<feature type="binding site" evidence="1">
    <location>
        <position position="87"/>
    </location>
    <ligand>
        <name>Mg(2+)</name>
        <dbReference type="ChEBI" id="CHEBI:18420"/>
        <label>1</label>
    </ligand>
</feature>
<feature type="binding site" evidence="1">
    <location>
        <position position="87"/>
    </location>
    <ligand>
        <name>Mg(2+)</name>
        <dbReference type="ChEBI" id="CHEBI:18420"/>
        <label>2</label>
    </ligand>
</feature>
<feature type="binding site" evidence="1">
    <location>
        <position position="91"/>
    </location>
    <ligand>
        <name>Mg(2+)</name>
        <dbReference type="ChEBI" id="CHEBI:18420"/>
        <label>1</label>
    </ligand>
</feature>
<feature type="binding site" evidence="1">
    <location>
        <position position="91"/>
    </location>
    <ligand>
        <name>Mg(2+)</name>
        <dbReference type="ChEBI" id="CHEBI:18420"/>
        <label>2</label>
    </ligand>
</feature>
<feature type="binding site" evidence="1">
    <location>
        <position position="96"/>
    </location>
    <ligand>
        <name>dimethylallyl diphosphate</name>
        <dbReference type="ChEBI" id="CHEBI:57623"/>
    </ligand>
</feature>
<feature type="binding site" evidence="1">
    <location>
        <position position="97"/>
    </location>
    <ligand>
        <name>isopentenyl diphosphate</name>
        <dbReference type="ChEBI" id="CHEBI:128769"/>
    </ligand>
</feature>
<feature type="binding site" evidence="1">
    <location>
        <position position="174"/>
    </location>
    <ligand>
        <name>dimethylallyl diphosphate</name>
        <dbReference type="ChEBI" id="CHEBI:57623"/>
    </ligand>
</feature>
<feature type="binding site" evidence="1">
    <location>
        <position position="175"/>
    </location>
    <ligand>
        <name>dimethylallyl diphosphate</name>
        <dbReference type="ChEBI" id="CHEBI:57623"/>
    </ligand>
</feature>
<feature type="binding site" evidence="1">
    <location>
        <position position="208"/>
    </location>
    <ligand>
        <name>dimethylallyl diphosphate</name>
        <dbReference type="ChEBI" id="CHEBI:57623"/>
    </ligand>
</feature>
<feature type="binding site" evidence="1">
    <location>
        <position position="211"/>
    </location>
    <ligand>
        <name>Mg(2+)</name>
        <dbReference type="ChEBI" id="CHEBI:18420"/>
        <label>3</label>
    </ligand>
</feature>
<feature type="binding site" evidence="1">
    <location>
        <position position="215"/>
    </location>
    <ligand>
        <name>dimethylallyl diphosphate</name>
        <dbReference type="ChEBI" id="CHEBI:57623"/>
    </ligand>
</feature>
<feature type="binding site" evidence="1">
    <location>
        <position position="225"/>
    </location>
    <ligand>
        <name>dimethylallyl diphosphate</name>
        <dbReference type="ChEBI" id="CHEBI:57623"/>
    </ligand>
</feature>
<feature type="binding site" evidence="1">
    <location>
        <position position="235"/>
    </location>
    <ligand>
        <name>dimethylallyl diphosphate</name>
        <dbReference type="ChEBI" id="CHEBI:57623"/>
    </ligand>
</feature>
<keyword id="KW-0460">Magnesium</keyword>
<keyword id="KW-0479">Metal-binding</keyword>
<keyword id="KW-1185">Reference proteome</keyword>
<keyword id="KW-0808">Transferase</keyword>
<proteinExistence type="evidence at protein level"/>
<accession>I1RL14</accession>
<sequence>MAQSVPPASSHGQLTVGEVGTSVNSVPYARHEEIIRAPLTYLLNLPGKDVRSKMIAAFNQWLKIPEDKLDVIKRIIMLLHNASLLLDDIQDSSKLRRGLPVSHSIFGIAQTINAANYAFFLAQQELPKLGDARAFEIFTEELLHLHRGQGMDIYWRDASICPTEEEYFTMVSNKTGGLFRLAVKLMQLASESDKDYVPLVNVLGVIFQIRDDYLNLQSGNYAKNKGFGEDLTEGKFSFPIIHSIRSNPANIQLSSILKQRTTDIDVKLFAVGYIESTGSFEHCRRKLVELTAEARAIMENIADGRSEDLESYACILLSKLILYNRLTYKVPAAQVIHGASGGYSTAPKPRILAQQIATVRAPHLQYAT</sequence>
<dbReference type="EC" id="2.5.1.-" evidence="6"/>
<dbReference type="EC" id="2.5.1.1" evidence="1"/>
<dbReference type="EC" id="2.5.1.29" evidence="1"/>
<dbReference type="EC" id="2.5.1.10" evidence="1"/>
<dbReference type="EMBL" id="HG970333">
    <property type="protein sequence ID" value="CEF79626.1"/>
    <property type="molecule type" value="Genomic_DNA"/>
</dbReference>
<dbReference type="RefSeq" id="XP_011320990.1">
    <property type="nucleotide sequence ID" value="XM_011322688.1"/>
</dbReference>
<dbReference type="SMR" id="I1RL14"/>
<dbReference type="FunCoup" id="I1RL14">
    <property type="interactions" value="470"/>
</dbReference>
<dbReference type="STRING" id="229533.I1RL14"/>
<dbReference type="KEGG" id="fgr:FGSG_04591"/>
<dbReference type="VEuPathDB" id="FungiDB:FGRAMPH1_01G15653"/>
<dbReference type="eggNOG" id="KOG0777">
    <property type="taxonomic scope" value="Eukaryota"/>
</dbReference>
<dbReference type="HOGENOM" id="CLU_014015_6_0_1"/>
<dbReference type="InParanoid" id="I1RL14"/>
<dbReference type="OrthoDB" id="16021at110618"/>
<dbReference type="UniPathway" id="UPA00213"/>
<dbReference type="Proteomes" id="UP000070720">
    <property type="component" value="Chromosome 2"/>
</dbReference>
<dbReference type="GO" id="GO:0004337">
    <property type="term" value="F:(2E,6E)-farnesyl diphosphate synthase activity"/>
    <property type="evidence" value="ECO:0007669"/>
    <property type="project" value="UniProtKB-EC"/>
</dbReference>
<dbReference type="GO" id="GO:0004161">
    <property type="term" value="F:dimethylallyltranstransferase activity"/>
    <property type="evidence" value="ECO:0007669"/>
    <property type="project" value="UniProtKB-EC"/>
</dbReference>
<dbReference type="GO" id="GO:0004311">
    <property type="term" value="F:geranylgeranyl diphosphate synthase activity"/>
    <property type="evidence" value="ECO:0007669"/>
    <property type="project" value="UniProtKB-EC"/>
</dbReference>
<dbReference type="GO" id="GO:0046872">
    <property type="term" value="F:metal ion binding"/>
    <property type="evidence" value="ECO:0007669"/>
    <property type="project" value="UniProtKB-KW"/>
</dbReference>
<dbReference type="GO" id="GO:0046165">
    <property type="term" value="P:alcohol biosynthetic process"/>
    <property type="evidence" value="ECO:0007669"/>
    <property type="project" value="UniProtKB-ARBA"/>
</dbReference>
<dbReference type="GO" id="GO:0043386">
    <property type="term" value="P:mycotoxin biosynthetic process"/>
    <property type="evidence" value="ECO:0007669"/>
    <property type="project" value="UniProtKB-ARBA"/>
</dbReference>
<dbReference type="GO" id="GO:0016114">
    <property type="term" value="P:terpenoid biosynthetic process"/>
    <property type="evidence" value="ECO:0007669"/>
    <property type="project" value="UniProtKB-UniPathway"/>
</dbReference>
<dbReference type="CDD" id="cd00685">
    <property type="entry name" value="Trans_IPPS_HT"/>
    <property type="match status" value="1"/>
</dbReference>
<dbReference type="Gene3D" id="1.10.600.10">
    <property type="entry name" value="Farnesyl Diphosphate Synthase"/>
    <property type="match status" value="1"/>
</dbReference>
<dbReference type="InterPro" id="IPR008949">
    <property type="entry name" value="Isoprenoid_synthase_dom_sf"/>
</dbReference>
<dbReference type="InterPro" id="IPR000092">
    <property type="entry name" value="Polyprenyl_synt"/>
</dbReference>
<dbReference type="InterPro" id="IPR033749">
    <property type="entry name" value="Polyprenyl_synt_CS"/>
</dbReference>
<dbReference type="PANTHER" id="PTHR12001">
    <property type="entry name" value="GERANYLGERANYL PYROPHOSPHATE SYNTHASE"/>
    <property type="match status" value="1"/>
</dbReference>
<dbReference type="PANTHER" id="PTHR12001:SF70">
    <property type="entry name" value="PYROPHOSPHATE SYNTHETASE ATMG, PUTATIVE (AFU_ORTHOLOGUE AFUA_8G02400)-RELATED"/>
    <property type="match status" value="1"/>
</dbReference>
<dbReference type="Pfam" id="PF00348">
    <property type="entry name" value="polyprenyl_synt"/>
    <property type="match status" value="1"/>
</dbReference>
<dbReference type="SFLD" id="SFLDS00005">
    <property type="entry name" value="Isoprenoid_Synthase_Type_I"/>
    <property type="match status" value="1"/>
</dbReference>
<dbReference type="SUPFAM" id="SSF48576">
    <property type="entry name" value="Terpenoid synthases"/>
    <property type="match status" value="1"/>
</dbReference>
<dbReference type="PROSITE" id="PS00723">
    <property type="entry name" value="POLYPRENYL_SYNTHASE_1"/>
    <property type="match status" value="1"/>
</dbReference>
<dbReference type="PROSITE" id="PS00444">
    <property type="entry name" value="POLYPRENYL_SYNTHASE_2"/>
    <property type="match status" value="1"/>
</dbReference>
<evidence type="ECO:0000250" key="1">
    <source>
        <dbReference type="UniProtKB" id="Q12051"/>
    </source>
</evidence>
<evidence type="ECO:0000269" key="2">
    <source>
    </source>
</evidence>
<evidence type="ECO:0000269" key="3">
    <source>
    </source>
</evidence>
<evidence type="ECO:0000303" key="4">
    <source>
    </source>
</evidence>
<evidence type="ECO:0000305" key="5"/>
<evidence type="ECO:0000305" key="6">
    <source>
    </source>
</evidence>
<gene>
    <name evidence="4" type="primary">dpfgD</name>
    <name type="ORF">FG04591</name>
    <name type="ORF">FGRAMPH1_01T15653</name>
</gene>
<protein>
    <recommendedName>
        <fullName evidence="4">Geranylgeranyl pyrophosphate synthase dpfgD</fullName>
        <shortName evidence="5">GGPP synthase</shortName>
        <shortName evidence="5">GGPPSase</shortName>
        <ecNumber evidence="6">2.5.1.-</ecNumber>
    </recommendedName>
    <alternativeName>
        <fullName evidence="1">(2E,6E)-farnesyl diphosphate synthase</fullName>
    </alternativeName>
    <alternativeName>
        <fullName evidence="1">Dimethylallyltranstransferase</fullName>
        <ecNumber evidence="1">2.5.1.1</ecNumber>
    </alternativeName>
    <alternativeName>
        <fullName evidence="4">Diterpenoid pyrone biosynthesis cluster protein D</fullName>
    </alternativeName>
    <alternativeName>
        <fullName evidence="1">Farnesyl diphosphate synthase</fullName>
    </alternativeName>
    <alternativeName>
        <fullName evidence="1">Farnesyltranstransferase</fullName>
        <ecNumber evidence="1">2.5.1.29</ecNumber>
    </alternativeName>
    <alternativeName>
        <fullName evidence="1">Geranylgeranyl diphosphate synthase</fullName>
    </alternativeName>
    <alternativeName>
        <fullName evidence="1">Geranyltranstransferase</fullName>
        <ecNumber evidence="1">2.5.1.10</ecNumber>
    </alternativeName>
</protein>
<reference key="1">
    <citation type="journal article" date="2007" name="Science">
        <title>The Fusarium graminearum genome reveals a link between localized polymorphism and pathogen specialization.</title>
        <authorList>
            <person name="Cuomo C.A."/>
            <person name="Gueldener U."/>
            <person name="Xu J.-R."/>
            <person name="Trail F."/>
            <person name="Turgeon B.G."/>
            <person name="Di Pietro A."/>
            <person name="Walton J.D."/>
            <person name="Ma L.-J."/>
            <person name="Baker S.E."/>
            <person name="Rep M."/>
            <person name="Adam G."/>
            <person name="Antoniw J."/>
            <person name="Baldwin T."/>
            <person name="Calvo S.E."/>
            <person name="Chang Y.-L."/>
            <person name="DeCaprio D."/>
            <person name="Gale L.R."/>
            <person name="Gnerre S."/>
            <person name="Goswami R.S."/>
            <person name="Hammond-Kosack K."/>
            <person name="Harris L.J."/>
            <person name="Hilburn K."/>
            <person name="Kennell J.C."/>
            <person name="Kroken S."/>
            <person name="Magnuson J.K."/>
            <person name="Mannhaupt G."/>
            <person name="Mauceli E.W."/>
            <person name="Mewes H.-W."/>
            <person name="Mitterbauer R."/>
            <person name="Muehlbauer G."/>
            <person name="Muensterkoetter M."/>
            <person name="Nelson D."/>
            <person name="O'Donnell K."/>
            <person name="Ouellet T."/>
            <person name="Qi W."/>
            <person name="Quesneville H."/>
            <person name="Roncero M.I.G."/>
            <person name="Seong K.-Y."/>
            <person name="Tetko I.V."/>
            <person name="Urban M."/>
            <person name="Waalwijk C."/>
            <person name="Ward T.J."/>
            <person name="Yao J."/>
            <person name="Birren B.W."/>
            <person name="Kistler H.C."/>
        </authorList>
    </citation>
    <scope>NUCLEOTIDE SEQUENCE [LARGE SCALE GENOMIC DNA]</scope>
    <source>
        <strain>ATCC MYA-4620 / CBS 123657 / FGSC 9075 / NRRL 31084 / PH-1</strain>
    </source>
</reference>
<reference key="2">
    <citation type="journal article" date="2010" name="Nature">
        <title>Comparative genomics reveals mobile pathogenicity chromosomes in Fusarium.</title>
        <authorList>
            <person name="Ma L.-J."/>
            <person name="van der Does H.C."/>
            <person name="Borkovich K.A."/>
            <person name="Coleman J.J."/>
            <person name="Daboussi M.-J."/>
            <person name="Di Pietro A."/>
            <person name="Dufresne M."/>
            <person name="Freitag M."/>
            <person name="Grabherr M."/>
            <person name="Henrissat B."/>
            <person name="Houterman P.M."/>
            <person name="Kang S."/>
            <person name="Shim W.-B."/>
            <person name="Woloshuk C."/>
            <person name="Xie X."/>
            <person name="Xu J.-R."/>
            <person name="Antoniw J."/>
            <person name="Baker S.E."/>
            <person name="Bluhm B.H."/>
            <person name="Breakspear A."/>
            <person name="Brown D.W."/>
            <person name="Butchko R.A.E."/>
            <person name="Chapman S."/>
            <person name="Coulson R."/>
            <person name="Coutinho P.M."/>
            <person name="Danchin E.G.J."/>
            <person name="Diener A."/>
            <person name="Gale L.R."/>
            <person name="Gardiner D.M."/>
            <person name="Goff S."/>
            <person name="Hammond-Kosack K.E."/>
            <person name="Hilburn K."/>
            <person name="Hua-Van A."/>
            <person name="Jonkers W."/>
            <person name="Kazan K."/>
            <person name="Kodira C.D."/>
            <person name="Koehrsen M."/>
            <person name="Kumar L."/>
            <person name="Lee Y.-H."/>
            <person name="Li L."/>
            <person name="Manners J.M."/>
            <person name="Miranda-Saavedra D."/>
            <person name="Mukherjee M."/>
            <person name="Park G."/>
            <person name="Park J."/>
            <person name="Park S.-Y."/>
            <person name="Proctor R.H."/>
            <person name="Regev A."/>
            <person name="Ruiz-Roldan M.C."/>
            <person name="Sain D."/>
            <person name="Sakthikumar S."/>
            <person name="Sykes S."/>
            <person name="Schwartz D.C."/>
            <person name="Turgeon B.G."/>
            <person name="Wapinski I."/>
            <person name="Yoder O."/>
            <person name="Young S."/>
            <person name="Zeng Q."/>
            <person name="Zhou S."/>
            <person name="Galagan J."/>
            <person name="Cuomo C.A."/>
            <person name="Kistler H.C."/>
            <person name="Rep M."/>
        </authorList>
    </citation>
    <scope>GENOME REANNOTATION</scope>
    <source>
        <strain>ATCC MYA-4620 / CBS 123657 / FGSC 9075 / NRRL 31084 / PH-1</strain>
    </source>
</reference>
<reference key="3">
    <citation type="journal article" date="2015" name="BMC Genomics">
        <title>The completed genome sequence of the pathogenic ascomycete fungus Fusarium graminearum.</title>
        <authorList>
            <person name="King R."/>
            <person name="Urban M."/>
            <person name="Hammond-Kosack M.C.U."/>
            <person name="Hassani-Pak K."/>
            <person name="Hammond-Kosack K.E."/>
        </authorList>
    </citation>
    <scope>NUCLEOTIDE SEQUENCE [LARGE SCALE GENOMIC DNA]</scope>
    <source>
        <strain>ATCC MYA-4620 / CBS 123657 / FGSC 9075 / NRRL 31084 / PH-1</strain>
    </source>
</reference>
<reference key="4">
    <citation type="journal article" date="2020" name="Nat. Commun.">
        <title>Synthetic biology based construction of biological activity-related library of fungal decalin-containing diterpenoid pyrones.</title>
        <authorList>
            <person name="Tsukada K."/>
            <person name="Shinki S."/>
            <person name="Kaneko A."/>
            <person name="Murakami K."/>
            <person name="Irie K."/>
            <person name="Murai M."/>
            <person name="Miyoshi H."/>
            <person name="Dan S."/>
            <person name="Kawaji K."/>
            <person name="Hayashi H."/>
            <person name="Kodama E.N."/>
            <person name="Hori A."/>
            <person name="Salim E."/>
            <person name="Kuraishi T."/>
            <person name="Hirata N."/>
            <person name="Kanda Y."/>
            <person name="Asai T."/>
        </authorList>
    </citation>
    <scope>FUNCTION</scope>
    <scope>PATHWAY</scope>
    <scope>BIOTECHNOLOGY</scope>
</reference>
<reference key="5">
    <citation type="journal article" date="2023" name="J. Fungi">
        <title>CRISPR-Cas9 Gene Editing and Secondary Metabolite Screening Confirm Fusarium graminearum C16 Biosynthetic Gene Cluster Products as Decalin-Containing Diterpenoid Pyrones.</title>
        <authorList>
            <person name="Hicks C."/>
            <person name="Witte T.E."/>
            <person name="Sproule A."/>
            <person name="Hermans A."/>
            <person name="Shields S.W."/>
            <person name="Colquhoun R."/>
            <person name="Blackman C."/>
            <person name="Boddy C.N."/>
            <person name="Subramaniam R."/>
            <person name="Overy D.P."/>
        </authorList>
    </citation>
    <scope>FUNCTION</scope>
    <scope>DISRUPTION PHENOTYPE</scope>
</reference>
<organism>
    <name type="scientific">Gibberella zeae (strain ATCC MYA-4620 / CBS 123657 / FGSC 9075 / NRRL 31084 / PH-1)</name>
    <name type="common">Wheat head blight fungus</name>
    <name type="synonym">Fusarium graminearum</name>
    <dbReference type="NCBI Taxonomy" id="229533"/>
    <lineage>
        <taxon>Eukaryota</taxon>
        <taxon>Fungi</taxon>
        <taxon>Dikarya</taxon>
        <taxon>Ascomycota</taxon>
        <taxon>Pezizomycotina</taxon>
        <taxon>Sordariomycetes</taxon>
        <taxon>Hypocreomycetidae</taxon>
        <taxon>Hypocreales</taxon>
        <taxon>Nectriaceae</taxon>
        <taxon>Fusarium</taxon>
    </lineage>
</organism>